<accession>C4NYZ3</accession>
<accession>G7PL56</accession>
<organism>
    <name type="scientific">Macaca fascicularis</name>
    <name type="common">Crab-eating macaque</name>
    <name type="synonym">Cynomolgus monkey</name>
    <dbReference type="NCBI Taxonomy" id="9541"/>
    <lineage>
        <taxon>Eukaryota</taxon>
        <taxon>Metazoa</taxon>
        <taxon>Chordata</taxon>
        <taxon>Craniata</taxon>
        <taxon>Vertebrata</taxon>
        <taxon>Euteleostomi</taxon>
        <taxon>Mammalia</taxon>
        <taxon>Eutheria</taxon>
        <taxon>Euarchontoglires</taxon>
        <taxon>Primates</taxon>
        <taxon>Haplorrhini</taxon>
        <taxon>Catarrhini</taxon>
        <taxon>Cercopithecidae</taxon>
        <taxon>Cercopithecinae</taxon>
        <taxon>Macaca</taxon>
    </lineage>
</organism>
<evidence type="ECO:0000250" key="1">
    <source>
        <dbReference type="UniProtKB" id="O54754"/>
    </source>
</evidence>
<evidence type="ECO:0000250" key="2">
    <source>
        <dbReference type="UniProtKB" id="Q06278"/>
    </source>
</evidence>
<evidence type="ECO:0000250" key="3">
    <source>
        <dbReference type="UniProtKB" id="Q5SGK3"/>
    </source>
</evidence>
<evidence type="ECO:0000255" key="4">
    <source>
        <dbReference type="PROSITE-ProRule" id="PRU00465"/>
    </source>
</evidence>
<evidence type="ECO:0000255" key="5">
    <source>
        <dbReference type="PROSITE-ProRule" id="PRU00718"/>
    </source>
</evidence>
<evidence type="ECO:0000269" key="6">
    <source>
    </source>
</evidence>
<evidence type="ECO:0000305" key="7"/>
<evidence type="ECO:0000305" key="8">
    <source>
    </source>
</evidence>
<proteinExistence type="evidence at transcript level"/>
<sequence length="1349" mass="148845">MRCASRSDELVFFVNGRKVMERNVDPEGTLLTFLRKNLRLTGTKYACGRGGCGACTVMVSKHDPVSRKIQRHFSVTACLMPICSLYGAAVTTVEGVGSIKTRLHPVQERIAKSHGTQCGFCTPGMVMSMYTLLRNHPQPSEEQLTEALGGNLCRCTGYRPILESGRTFCMESNSCQQKGTGKCCLDWGENDSSRLGKKNEICTKLFAKEEFQSLDPTQELIFPPELLRMAENPEKRTLTFYGERVTWISPGTLKDLLELKVKHPEAPLVVGNTSLGPAMKSQRQFHPVLLSPARISELSMVTKTSDGLTIGAGCSLAQTQDILAERIAELPEEKTQTYRALLKHLRSLAGQQIRNMASLGGHVISRHCCSDLNPVLAVSNATLNLISAEGTRQIPLNEHFLAGLASADLKPEEILESVHIPHSQKWEFVSAFRQAQCQQNALPHVNAGMRVLLKEGTDSIEDLSIAYGGVGAATISAHRSCQQLLGRRWNELMLDEACRLLLDEVSLPGSAPGGRVEFKRTLVVSFLFKFYLEVLQELKKLVKLFSVAVGADSRHRSEVSDQFLSALEDFPVTIPQGVQTYQNVDPHQPLQDPVGRPIMHLSALKHATGEAMFCDDIPVVDKELFMALVTSSRAHAKIISIDVSKALELPEVVDVITAEDIPGTNGAEGDKLLAVEEVTCVGQIICAVVAETDVQAKRATEKIEITYEDLEPVIFTIKDAIKHNSFLCPEKKLEQGNVEEAFEKVDQTIEGEVHVGGQEHFYMETQRVLVIPKTEDKELDIYVSTQDPAHVQKTVSSTLNIPINRITCHVKRVGGGFGGKVGKPAVFGAIAAVGAIKTGHPIRLVLDREDDMLITGGRHPLFGKYKVGFTNNGRIKALDIECYINGGCTLDDSELVTEFLILKLENAYKIRNLRFRGRACMTNLPSNTAFRGFGFPQGALVTESCITAVAAKCGLPPEKIREKNMYKTVDKTIYKQAFNPETLIRCWNECLDKSSFHSRRMQVEEFNKKNYWKKKGIAIIPMKFSVGFAATSYHQAAALVHIYTDGSVLVTHGGNELGQGIHTKMLQVASRELKIPMSCIHISETSTATVPNTIATAASVGADVNGRAVQNACQILLKRLEPIIKKHPEGTWENWIEAAFEQRISLSATGYFRGYKAFMDWEKGVGDPFPYYVYGAACSEVEIDCLTGAHKKIRTDIIMDACCSLNPAIDIGQIEGSFIQGMGLYTTEELKYSPEGILYSRSPDEYKIPTITDVPEEFNVSLLPSSQTPLTIYSSKGLGESGMFLGSSVFFAIADAVATVRRERDIAEDFMVQSPATPERVRMACADRFTKMIPRDDPETFKPWSIPIA</sequence>
<feature type="chain" id="PRO_0000425244" description="Aldehyde oxidase 2">
    <location>
        <begin position="1"/>
        <end position="1349"/>
    </location>
</feature>
<feature type="domain" description="2Fe-2S ferredoxin-type" evidence="4">
    <location>
        <begin position="8"/>
        <end position="96"/>
    </location>
</feature>
<feature type="domain" description="FAD-binding PCMH-type" evidence="5">
    <location>
        <begin position="240"/>
        <end position="425"/>
    </location>
</feature>
<feature type="active site" description="Proton acceptor; for azaheterocycle hydroxylase activity" evidence="1">
    <location>
        <position position="1280"/>
    </location>
</feature>
<feature type="binding site" evidence="2">
    <location>
        <position position="47"/>
    </location>
    <ligand>
        <name>[2Fe-2S] cluster</name>
        <dbReference type="ChEBI" id="CHEBI:190135"/>
        <label>1</label>
    </ligand>
</feature>
<feature type="binding site" evidence="2">
    <location>
        <position position="52"/>
    </location>
    <ligand>
        <name>[2Fe-2S] cluster</name>
        <dbReference type="ChEBI" id="CHEBI:190135"/>
        <label>1</label>
    </ligand>
</feature>
<feature type="binding site" evidence="2">
    <location>
        <position position="55"/>
    </location>
    <ligand>
        <name>[2Fe-2S] cluster</name>
        <dbReference type="ChEBI" id="CHEBI:190135"/>
        <label>1</label>
    </ligand>
</feature>
<feature type="binding site" evidence="2">
    <location>
        <position position="78"/>
    </location>
    <ligand>
        <name>[2Fe-2S] cluster</name>
        <dbReference type="ChEBI" id="CHEBI:190135"/>
        <label>1</label>
    </ligand>
</feature>
<feature type="binding site" evidence="2">
    <location>
        <position position="117"/>
    </location>
    <ligand>
        <name>Mo-molybdopterin</name>
        <dbReference type="ChEBI" id="CHEBI:71302"/>
    </ligand>
</feature>
<feature type="binding site" evidence="2">
    <location>
        <position position="118"/>
    </location>
    <ligand>
        <name>[2Fe-2S] cluster</name>
        <dbReference type="ChEBI" id="CHEBI:190135"/>
        <label>2</label>
    </ligand>
</feature>
<feature type="binding site" evidence="2">
    <location>
        <position position="121"/>
    </location>
    <ligand>
        <name>[2Fe-2S] cluster</name>
        <dbReference type="ChEBI" id="CHEBI:190135"/>
        <label>2</label>
    </ligand>
</feature>
<feature type="binding site" evidence="2">
    <location>
        <position position="153"/>
    </location>
    <ligand>
        <name>[2Fe-2S] cluster</name>
        <dbReference type="ChEBI" id="CHEBI:190135"/>
        <label>2</label>
    </ligand>
</feature>
<feature type="binding site" evidence="2">
    <location>
        <position position="155"/>
    </location>
    <ligand>
        <name>[2Fe-2S] cluster</name>
        <dbReference type="ChEBI" id="CHEBI:190135"/>
        <label>2</label>
    </ligand>
</feature>
<feature type="binding site" evidence="2">
    <location>
        <position position="155"/>
    </location>
    <ligand>
        <name>Mo-molybdopterin</name>
        <dbReference type="ChEBI" id="CHEBI:71302"/>
    </ligand>
</feature>
<feature type="binding site" evidence="2">
    <location>
        <begin position="268"/>
        <end position="275"/>
    </location>
    <ligand>
        <name>FAD</name>
        <dbReference type="ChEBI" id="CHEBI:57692"/>
    </ligand>
</feature>
<feature type="binding site" evidence="2">
    <location>
        <position position="349"/>
    </location>
    <ligand>
        <name>FAD</name>
        <dbReference type="ChEBI" id="CHEBI:57692"/>
    </ligand>
</feature>
<feature type="binding site" evidence="2">
    <location>
        <position position="358"/>
    </location>
    <ligand>
        <name>FAD</name>
        <dbReference type="ChEBI" id="CHEBI:57692"/>
    </ligand>
</feature>
<feature type="binding site" evidence="2">
    <location>
        <position position="362"/>
    </location>
    <ligand>
        <name>FAD</name>
        <dbReference type="ChEBI" id="CHEBI:57692"/>
    </ligand>
</feature>
<feature type="binding site" evidence="2">
    <location>
        <position position="371"/>
    </location>
    <ligand>
        <name>FAD</name>
        <dbReference type="ChEBI" id="CHEBI:57692"/>
    </ligand>
</feature>
<feature type="binding site" evidence="2">
    <location>
        <position position="415"/>
    </location>
    <ligand>
        <name>FAD</name>
        <dbReference type="ChEBI" id="CHEBI:57692"/>
    </ligand>
</feature>
<feature type="binding site" evidence="2">
    <location>
        <begin position="816"/>
        <end position="817"/>
    </location>
    <ligand>
        <name>Mo-molybdopterin</name>
        <dbReference type="ChEBI" id="CHEBI:71302"/>
    </ligand>
</feature>
<feature type="binding site" evidence="2">
    <location>
        <begin position="1098"/>
        <end position="1101"/>
    </location>
    <ligand>
        <name>Mo-molybdopterin</name>
        <dbReference type="ChEBI" id="CHEBI:71302"/>
    </ligand>
</feature>
<feature type="binding site" evidence="2">
    <location>
        <position position="1213"/>
    </location>
    <ligand>
        <name>Mo-molybdopterin</name>
        <dbReference type="ChEBI" id="CHEBI:71302"/>
    </ligand>
</feature>
<feature type="binding site" evidence="2">
    <location>
        <position position="1278"/>
    </location>
    <ligand>
        <name>Mo-molybdopterin</name>
        <dbReference type="ChEBI" id="CHEBI:71302"/>
    </ligand>
</feature>
<feature type="sequence conflict" description="In Ref. 1; ACQ73552." evidence="7" ref="1">
    <original>R</original>
    <variation>C</variation>
    <location>
        <position position="2"/>
    </location>
</feature>
<feature type="sequence conflict" description="In Ref. 1; ACQ73552." evidence="7" ref="1">
    <location>
        <position position="70"/>
    </location>
</feature>
<feature type="sequence conflict" description="In Ref. 1; ACQ73552." evidence="7" ref="1">
    <original>R</original>
    <variation>P</variation>
    <location>
        <position position="194"/>
    </location>
</feature>
<feature type="sequence conflict" description="In Ref. 1; ACQ73552." evidence="7" ref="1">
    <location>
        <begin position="548"/>
        <end position="550"/>
    </location>
</feature>
<feature type="sequence conflict" description="In Ref. 1; ACQ73552." evidence="7" ref="1">
    <original>V</original>
    <variation>A</variation>
    <location>
        <position position="675"/>
    </location>
</feature>
<feature type="sequence conflict" description="In Ref. 1; ACQ73552." evidence="7" ref="1">
    <original>E</original>
    <variation>K</variation>
    <location>
        <position position="708"/>
    </location>
</feature>
<feature type="sequence conflict" description="In Ref. 1; ACQ73552." evidence="7" ref="1">
    <original>I</original>
    <variation>V</variation>
    <location>
        <position position="1124"/>
    </location>
</feature>
<feature type="sequence conflict" description="In Ref. 1; ACQ73552." evidence="7" ref="1">
    <original>S</original>
    <variation>P</variation>
    <location>
        <position position="1265"/>
    </location>
</feature>
<gene>
    <name type="primary">AOX2</name>
    <name type="synonym">AOH3</name>
    <name type="synonym">AOX3L1</name>
</gene>
<comment type="function">
    <text evidence="3">Oxidase with broad substrate specificity, oxidizing aromatic azaheterocycles, such as phthalazine, as well as aldehydes, such as benzaldehyde and retinal.</text>
</comment>
<comment type="catalytic activity">
    <reaction>
        <text>an aldehyde + O2 + H2O = a carboxylate + H2O2 + H(+)</text>
        <dbReference type="Rhea" id="RHEA:16829"/>
        <dbReference type="ChEBI" id="CHEBI:15377"/>
        <dbReference type="ChEBI" id="CHEBI:15378"/>
        <dbReference type="ChEBI" id="CHEBI:15379"/>
        <dbReference type="ChEBI" id="CHEBI:16240"/>
        <dbReference type="ChEBI" id="CHEBI:17478"/>
        <dbReference type="ChEBI" id="CHEBI:29067"/>
        <dbReference type="EC" id="1.2.3.1"/>
    </reaction>
</comment>
<comment type="cofactor">
    <cofactor evidence="1">
        <name>[2Fe-2S] cluster</name>
        <dbReference type="ChEBI" id="CHEBI:190135"/>
    </cofactor>
    <text evidence="1">Binds 2 [2Fe-2S] clusters per subunit.</text>
</comment>
<comment type="cofactor">
    <cofactor evidence="1">
        <name>FAD</name>
        <dbReference type="ChEBI" id="CHEBI:57692"/>
    </cofactor>
    <text evidence="1">Binds 1 FAD per subunit.</text>
</comment>
<comment type="cofactor">
    <cofactor evidence="1">
        <name>Mo-molybdopterin</name>
        <dbReference type="ChEBI" id="CHEBI:71302"/>
    </cofactor>
    <text evidence="1">Binds 1 Mo-molybdopterin (Mo-MPT) cofactor per subunit.</text>
</comment>
<comment type="subunit">
    <text evidence="1">Homodimer.</text>
</comment>
<comment type="subcellular location">
    <subcellularLocation>
        <location evidence="3">Cytoplasm</location>
    </subcellularLocation>
</comment>
<comment type="tissue specificity">
    <text evidence="6">Only detected at very few levels in nasal mucosa.</text>
</comment>
<comment type="miscellaneous">
    <text evidence="8">AOX genes evolved from a xanthine oxidoreductase ancestral precursor via a series of gene duplication and suppression/deletion events. Different animal species contain a different complement of AOX genes encoding an equivalent number of AOX isoenzymes. In mammals, the two extremes are represented by certain rodents such as mice and rats, which are endowed with 4 AOX genes, and by humans, whose genome is characterized by a single active gene (PubMed:23263164).</text>
</comment>
<comment type="similarity">
    <text evidence="7">Belongs to the xanthine dehydrogenase family.</text>
</comment>
<protein>
    <recommendedName>
        <fullName>Aldehyde oxidase 2</fullName>
        <ecNumber>1.2.3.1</ecNumber>
    </recommendedName>
    <alternativeName>
        <fullName>Aldehyde oxidase homolog 3</fullName>
    </alternativeName>
    <alternativeName>
        <fullName>Azaheterocycle hydroxylase 2</fullName>
        <ecNumber>1.17.3.-</ecNumber>
    </alternativeName>
</protein>
<name>AOXB_MACFA</name>
<keyword id="KW-0001">2Fe-2S</keyword>
<keyword id="KW-0963">Cytoplasm</keyword>
<keyword id="KW-0274">FAD</keyword>
<keyword id="KW-0285">Flavoprotein</keyword>
<keyword id="KW-0408">Iron</keyword>
<keyword id="KW-0411">Iron-sulfur</keyword>
<keyword id="KW-0479">Metal-binding</keyword>
<keyword id="KW-0500">Molybdenum</keyword>
<keyword id="KW-0560">Oxidoreductase</keyword>
<keyword id="KW-1185">Reference proteome</keyword>
<reference key="1">
    <citation type="journal article" date="2013" name="Cell. Mol. Life Sci.">
        <title>Structure and evolution of vertebrate aldehyde oxidases: from gene duplication to gene suppression.</title>
        <authorList>
            <person name="Kurosaki M."/>
            <person name="Bolis M."/>
            <person name="Fratelli M."/>
            <person name="Barzago M.M."/>
            <person name="Pattini L."/>
            <person name="Perretta G."/>
            <person name="Terao M."/>
            <person name="Garattini E."/>
        </authorList>
    </citation>
    <scope>NUCLEOTIDE SEQUENCE [MRNA]</scope>
    <scope>TISSUE SPECIFICITY</scope>
    <scope>IDENTIFICATION OF PARALOGS</scope>
</reference>
<reference key="2">
    <citation type="journal article" date="2011" name="Nat. Biotechnol.">
        <title>Genome sequencing and comparison of two nonhuman primate animal models, the cynomolgus and Chinese rhesus macaques.</title>
        <authorList>
            <person name="Yan G."/>
            <person name="Zhang G."/>
            <person name="Fang X."/>
            <person name="Zhang Y."/>
            <person name="Li C."/>
            <person name="Ling F."/>
            <person name="Cooper D.N."/>
            <person name="Li Q."/>
            <person name="Li Y."/>
            <person name="van Gool A.J."/>
            <person name="Du H."/>
            <person name="Chen J."/>
            <person name="Chen R."/>
            <person name="Zhang P."/>
            <person name="Huang Z."/>
            <person name="Thompson J.R."/>
            <person name="Meng Y."/>
            <person name="Bai Y."/>
            <person name="Wang J."/>
            <person name="Zhuo M."/>
            <person name="Wang T."/>
            <person name="Huang Y."/>
            <person name="Wei L."/>
            <person name="Li J."/>
            <person name="Wang Z."/>
            <person name="Hu H."/>
            <person name="Yang P."/>
            <person name="Le L."/>
            <person name="Stenson P.D."/>
            <person name="Li B."/>
            <person name="Liu X."/>
            <person name="Ball E.V."/>
            <person name="An N."/>
            <person name="Huang Q."/>
            <person name="Zhang Y."/>
            <person name="Fan W."/>
            <person name="Zhang X."/>
            <person name="Li Y."/>
            <person name="Wang W."/>
            <person name="Katze M.G."/>
            <person name="Su B."/>
            <person name="Nielsen R."/>
            <person name="Yang H."/>
            <person name="Wang J."/>
            <person name="Wang X."/>
            <person name="Wang J."/>
        </authorList>
    </citation>
    <scope>NUCLEOTIDE SEQUENCE [LARGE SCALE GENOMIC DNA]</scope>
</reference>
<dbReference type="EC" id="1.2.3.1"/>
<dbReference type="EC" id="1.17.3.-"/>
<dbReference type="EMBL" id="FJ746636">
    <property type="protein sequence ID" value="ACQ73552.1"/>
    <property type="molecule type" value="mRNA"/>
</dbReference>
<dbReference type="EMBL" id="CM001287">
    <property type="protein sequence ID" value="EHH55065.1"/>
    <property type="molecule type" value="Genomic_DNA"/>
</dbReference>
<dbReference type="SMR" id="C4NYZ3"/>
<dbReference type="STRING" id="9541.ENSMFAP00000036441"/>
<dbReference type="eggNOG" id="KOG0430">
    <property type="taxonomic scope" value="Eukaryota"/>
</dbReference>
<dbReference type="Proteomes" id="UP000009130">
    <property type="component" value="Chromosome 12"/>
</dbReference>
<dbReference type="Proteomes" id="UP000233100">
    <property type="component" value="Unplaced"/>
</dbReference>
<dbReference type="GO" id="GO:0005829">
    <property type="term" value="C:cytosol"/>
    <property type="evidence" value="ECO:0000250"/>
    <property type="project" value="UniProtKB"/>
</dbReference>
<dbReference type="GO" id="GO:0051537">
    <property type="term" value="F:2 iron, 2 sulfur cluster binding"/>
    <property type="evidence" value="ECO:0000250"/>
    <property type="project" value="UniProtKB"/>
</dbReference>
<dbReference type="GO" id="GO:0004031">
    <property type="term" value="F:aldehyde oxidase activity"/>
    <property type="evidence" value="ECO:0000250"/>
    <property type="project" value="UniProtKB"/>
</dbReference>
<dbReference type="GO" id="GO:0071949">
    <property type="term" value="F:FAD binding"/>
    <property type="evidence" value="ECO:0007669"/>
    <property type="project" value="InterPro"/>
</dbReference>
<dbReference type="GO" id="GO:0050660">
    <property type="term" value="F:flavin adenine dinucleotide binding"/>
    <property type="evidence" value="ECO:0000250"/>
    <property type="project" value="UniProtKB"/>
</dbReference>
<dbReference type="GO" id="GO:0005506">
    <property type="term" value="F:iron ion binding"/>
    <property type="evidence" value="ECO:0000250"/>
    <property type="project" value="UniProtKB"/>
</dbReference>
<dbReference type="GO" id="GO:0043546">
    <property type="term" value="F:molybdopterin cofactor binding"/>
    <property type="evidence" value="ECO:0000250"/>
    <property type="project" value="UniProtKB"/>
</dbReference>
<dbReference type="GO" id="GO:0051287">
    <property type="term" value="F:NAD binding"/>
    <property type="evidence" value="ECO:0007669"/>
    <property type="project" value="InterPro"/>
</dbReference>
<dbReference type="GO" id="GO:0042803">
    <property type="term" value="F:protein homodimerization activity"/>
    <property type="evidence" value="ECO:0000250"/>
    <property type="project" value="UniProtKB"/>
</dbReference>
<dbReference type="GO" id="GO:0006805">
    <property type="term" value="P:xenobiotic metabolic process"/>
    <property type="evidence" value="ECO:0000250"/>
    <property type="project" value="UniProtKB"/>
</dbReference>
<dbReference type="CDD" id="cd00207">
    <property type="entry name" value="fer2"/>
    <property type="match status" value="1"/>
</dbReference>
<dbReference type="FunFam" id="1.10.150.120:FF:000001">
    <property type="entry name" value="Aldehyde oxidase 1"/>
    <property type="match status" value="1"/>
</dbReference>
<dbReference type="FunFam" id="3.10.20.30:FF:000015">
    <property type="entry name" value="Aldehyde oxidase 1"/>
    <property type="match status" value="1"/>
</dbReference>
<dbReference type="FunFam" id="3.30.365.10:FF:000003">
    <property type="entry name" value="Aldehyde oxidase 1"/>
    <property type="match status" value="1"/>
</dbReference>
<dbReference type="FunFam" id="3.90.1170.50:FF:000001">
    <property type="entry name" value="Aldehyde oxidase 1"/>
    <property type="match status" value="1"/>
</dbReference>
<dbReference type="FunFam" id="3.30.365.10:FF:000025">
    <property type="entry name" value="Aldehyde oxidase 4"/>
    <property type="match status" value="1"/>
</dbReference>
<dbReference type="FunFam" id="3.30.365.10:FF:000001">
    <property type="entry name" value="Xanthine dehydrogenase oxidase"/>
    <property type="match status" value="1"/>
</dbReference>
<dbReference type="FunFam" id="3.30.365.10:FF:000004">
    <property type="entry name" value="Xanthine dehydrogenase oxidase"/>
    <property type="match status" value="1"/>
</dbReference>
<dbReference type="FunFam" id="3.30.390.50:FF:000001">
    <property type="entry name" value="Xanthine dehydrogenase oxidase"/>
    <property type="match status" value="1"/>
</dbReference>
<dbReference type="FunFam" id="3.30.43.10:FF:000001">
    <property type="entry name" value="Xanthine dehydrogenase/oxidase"/>
    <property type="match status" value="1"/>
</dbReference>
<dbReference type="FunFam" id="3.30.465.10:FF:000004">
    <property type="entry name" value="Xanthine dehydrogenase/oxidase"/>
    <property type="match status" value="1"/>
</dbReference>
<dbReference type="Gene3D" id="3.10.20.30">
    <property type="match status" value="1"/>
</dbReference>
<dbReference type="Gene3D" id="3.30.465.10">
    <property type="match status" value="1"/>
</dbReference>
<dbReference type="Gene3D" id="1.10.150.120">
    <property type="entry name" value="[2Fe-2S]-binding domain"/>
    <property type="match status" value="1"/>
</dbReference>
<dbReference type="Gene3D" id="3.90.1170.50">
    <property type="entry name" value="Aldehyde oxidase/xanthine dehydrogenase, a/b hammerhead"/>
    <property type="match status" value="1"/>
</dbReference>
<dbReference type="Gene3D" id="3.30.365.10">
    <property type="entry name" value="Aldehyde oxidase/xanthine dehydrogenase, molybdopterin binding domain"/>
    <property type="match status" value="5"/>
</dbReference>
<dbReference type="Gene3D" id="3.30.390.50">
    <property type="entry name" value="CO dehydrogenase flavoprotein, C-terminal domain"/>
    <property type="match status" value="1"/>
</dbReference>
<dbReference type="Gene3D" id="3.30.43.10">
    <property type="entry name" value="Uridine Diphospho-n-acetylenolpyruvylglucosamine Reductase, domain 2"/>
    <property type="match status" value="1"/>
</dbReference>
<dbReference type="InterPro" id="IPR002888">
    <property type="entry name" value="2Fe-2S-bd"/>
</dbReference>
<dbReference type="InterPro" id="IPR036884">
    <property type="entry name" value="2Fe-2S-bd_dom_sf"/>
</dbReference>
<dbReference type="InterPro" id="IPR036010">
    <property type="entry name" value="2Fe-2S_ferredoxin-like_sf"/>
</dbReference>
<dbReference type="InterPro" id="IPR001041">
    <property type="entry name" value="2Fe-2S_ferredoxin-type"/>
</dbReference>
<dbReference type="InterPro" id="IPR006058">
    <property type="entry name" value="2Fe2S_fd_BS"/>
</dbReference>
<dbReference type="InterPro" id="IPR000674">
    <property type="entry name" value="Ald_Oxase/Xan_DH_a/b"/>
</dbReference>
<dbReference type="InterPro" id="IPR036856">
    <property type="entry name" value="Ald_Oxase/Xan_DH_a/b_sf"/>
</dbReference>
<dbReference type="InterPro" id="IPR016208">
    <property type="entry name" value="Ald_Oxase/xanthine_DH-like"/>
</dbReference>
<dbReference type="InterPro" id="IPR014313">
    <property type="entry name" value="Aldehyde_oxidase"/>
</dbReference>
<dbReference type="InterPro" id="IPR008274">
    <property type="entry name" value="AldOxase/xan_DH_MoCoBD1"/>
</dbReference>
<dbReference type="InterPro" id="IPR046867">
    <property type="entry name" value="AldOxase/xan_DH_MoCoBD2"/>
</dbReference>
<dbReference type="InterPro" id="IPR037165">
    <property type="entry name" value="AldOxase/xan_DH_Mopterin-bd_sf"/>
</dbReference>
<dbReference type="InterPro" id="IPR012675">
    <property type="entry name" value="Beta-grasp_dom_sf"/>
</dbReference>
<dbReference type="InterPro" id="IPR005107">
    <property type="entry name" value="CO_DH_flav_C"/>
</dbReference>
<dbReference type="InterPro" id="IPR036683">
    <property type="entry name" value="CO_DH_flav_C_dom_sf"/>
</dbReference>
<dbReference type="InterPro" id="IPR016166">
    <property type="entry name" value="FAD-bd_PCMH"/>
</dbReference>
<dbReference type="InterPro" id="IPR036318">
    <property type="entry name" value="FAD-bd_PCMH-like_sf"/>
</dbReference>
<dbReference type="InterPro" id="IPR016167">
    <property type="entry name" value="FAD-bd_PCMH_sub1"/>
</dbReference>
<dbReference type="InterPro" id="IPR016169">
    <property type="entry name" value="FAD-bd_PCMH_sub2"/>
</dbReference>
<dbReference type="InterPro" id="IPR002346">
    <property type="entry name" value="Mopterin_DH_FAD-bd"/>
</dbReference>
<dbReference type="NCBIfam" id="TIGR02969">
    <property type="entry name" value="mam_aldehyde_ox"/>
    <property type="match status" value="1"/>
</dbReference>
<dbReference type="PANTHER" id="PTHR45444">
    <property type="entry name" value="XANTHINE DEHYDROGENASE"/>
    <property type="match status" value="1"/>
</dbReference>
<dbReference type="PANTHER" id="PTHR45444:SF3">
    <property type="entry name" value="XANTHINE DEHYDROGENASE"/>
    <property type="match status" value="1"/>
</dbReference>
<dbReference type="Pfam" id="PF01315">
    <property type="entry name" value="Ald_Xan_dh_C"/>
    <property type="match status" value="1"/>
</dbReference>
<dbReference type="Pfam" id="PF03450">
    <property type="entry name" value="CO_deh_flav_C"/>
    <property type="match status" value="1"/>
</dbReference>
<dbReference type="Pfam" id="PF00941">
    <property type="entry name" value="FAD_binding_5"/>
    <property type="match status" value="1"/>
</dbReference>
<dbReference type="Pfam" id="PF00111">
    <property type="entry name" value="Fer2"/>
    <property type="match status" value="1"/>
</dbReference>
<dbReference type="Pfam" id="PF01799">
    <property type="entry name" value="Fer2_2"/>
    <property type="match status" value="1"/>
</dbReference>
<dbReference type="Pfam" id="PF02738">
    <property type="entry name" value="MoCoBD_1"/>
    <property type="match status" value="1"/>
</dbReference>
<dbReference type="Pfam" id="PF20256">
    <property type="entry name" value="MoCoBD_2"/>
    <property type="match status" value="1"/>
</dbReference>
<dbReference type="PIRSF" id="PIRSF000127">
    <property type="entry name" value="Xanthine_DH"/>
    <property type="match status" value="1"/>
</dbReference>
<dbReference type="SMART" id="SM01008">
    <property type="entry name" value="Ald_Xan_dh_C"/>
    <property type="match status" value="1"/>
</dbReference>
<dbReference type="SMART" id="SM01092">
    <property type="entry name" value="CO_deh_flav_C"/>
    <property type="match status" value="1"/>
</dbReference>
<dbReference type="SUPFAM" id="SSF54292">
    <property type="entry name" value="2Fe-2S ferredoxin-like"/>
    <property type="match status" value="1"/>
</dbReference>
<dbReference type="SUPFAM" id="SSF55447">
    <property type="entry name" value="CO dehydrogenase flavoprotein C-terminal domain-like"/>
    <property type="match status" value="1"/>
</dbReference>
<dbReference type="SUPFAM" id="SSF47741">
    <property type="entry name" value="CO dehydrogenase ISP C-domain like"/>
    <property type="match status" value="1"/>
</dbReference>
<dbReference type="SUPFAM" id="SSF54665">
    <property type="entry name" value="CO dehydrogenase molybdoprotein N-domain-like"/>
    <property type="match status" value="1"/>
</dbReference>
<dbReference type="SUPFAM" id="SSF56176">
    <property type="entry name" value="FAD-binding/transporter-associated domain-like"/>
    <property type="match status" value="1"/>
</dbReference>
<dbReference type="SUPFAM" id="SSF56003">
    <property type="entry name" value="Molybdenum cofactor-binding domain"/>
    <property type="match status" value="1"/>
</dbReference>
<dbReference type="PROSITE" id="PS00197">
    <property type="entry name" value="2FE2S_FER_1"/>
    <property type="match status" value="1"/>
</dbReference>
<dbReference type="PROSITE" id="PS51085">
    <property type="entry name" value="2FE2S_FER_2"/>
    <property type="match status" value="1"/>
</dbReference>
<dbReference type="PROSITE" id="PS51387">
    <property type="entry name" value="FAD_PCMH"/>
    <property type="match status" value="1"/>
</dbReference>